<comment type="function">
    <text evidence="1">Part of the twin-arginine translocation (Tat) system that transports large folded proteins containing a characteristic twin-arginine motif in their signal peptide across membranes. Together with TatC, TatB is part of a receptor directly interacting with Tat signal peptides. TatB may form an oligomeric binding site that transiently accommodates folded Tat precursor proteins before their translocation.</text>
</comment>
<comment type="subunit">
    <text evidence="1">The Tat system comprises two distinct complexes: a TatABC complex, containing multiple copies of TatA, TatB and TatC subunits, and a separate TatA complex, containing only TatA subunits. Substrates initially bind to the TatABC complex, which probably triggers association of the separate TatA complex to form the active translocon.</text>
</comment>
<comment type="subcellular location">
    <subcellularLocation>
        <location evidence="1">Cell inner membrane</location>
        <topology evidence="1">Single-pass membrane protein</topology>
    </subcellularLocation>
</comment>
<comment type="similarity">
    <text evidence="1">Belongs to the TatB family.</text>
</comment>
<sequence length="140" mass="15711">MFDIGFSELLLIAVVALVVLGPERLPKAARFAGLLVRRARTQWESIKQELERELEAEALKRNLENAQQVIHDAQAQLQSNQQDMNIQNSISILHEQTKRDIHPDRNTNTLELGTAVHHVHVTSPPPSTSTHGNNGQEKSQ</sequence>
<name>TATB_XYLFA</name>
<dbReference type="EMBL" id="AE003849">
    <property type="protein sequence ID" value="AAF83373.1"/>
    <property type="molecule type" value="Genomic_DNA"/>
</dbReference>
<dbReference type="PIR" id="A82791">
    <property type="entry name" value="A82791"/>
</dbReference>
<dbReference type="RefSeq" id="WP_010893089.1">
    <property type="nucleotide sequence ID" value="NC_002488.3"/>
</dbReference>
<dbReference type="SMR" id="Q9PFU4"/>
<dbReference type="STRING" id="160492.XF_0563"/>
<dbReference type="KEGG" id="xfa:XF_0563"/>
<dbReference type="PATRIC" id="fig|160492.11.peg.604"/>
<dbReference type="eggNOG" id="COG1826">
    <property type="taxonomic scope" value="Bacteria"/>
</dbReference>
<dbReference type="HOGENOM" id="CLU_086034_1_1_6"/>
<dbReference type="Proteomes" id="UP000000812">
    <property type="component" value="Chromosome"/>
</dbReference>
<dbReference type="GO" id="GO:0033281">
    <property type="term" value="C:TAT protein transport complex"/>
    <property type="evidence" value="ECO:0007669"/>
    <property type="project" value="UniProtKB-UniRule"/>
</dbReference>
<dbReference type="GO" id="GO:0008320">
    <property type="term" value="F:protein transmembrane transporter activity"/>
    <property type="evidence" value="ECO:0007669"/>
    <property type="project" value="UniProtKB-UniRule"/>
</dbReference>
<dbReference type="GO" id="GO:0043953">
    <property type="term" value="P:protein transport by the Tat complex"/>
    <property type="evidence" value="ECO:0007669"/>
    <property type="project" value="UniProtKB-UniRule"/>
</dbReference>
<dbReference type="Gene3D" id="1.20.5.3310">
    <property type="match status" value="1"/>
</dbReference>
<dbReference type="HAMAP" id="MF_00237">
    <property type="entry name" value="TatB"/>
    <property type="match status" value="1"/>
</dbReference>
<dbReference type="InterPro" id="IPR003369">
    <property type="entry name" value="TatA/B/E"/>
</dbReference>
<dbReference type="InterPro" id="IPR018448">
    <property type="entry name" value="TatB"/>
</dbReference>
<dbReference type="NCBIfam" id="TIGR01410">
    <property type="entry name" value="tatB"/>
    <property type="match status" value="1"/>
</dbReference>
<dbReference type="PANTHER" id="PTHR33162">
    <property type="entry name" value="SEC-INDEPENDENT PROTEIN TRANSLOCASE PROTEIN TATA, CHLOROPLASTIC"/>
    <property type="match status" value="1"/>
</dbReference>
<dbReference type="PANTHER" id="PTHR33162:SF1">
    <property type="entry name" value="SEC-INDEPENDENT PROTEIN TRANSLOCASE PROTEIN TATA, CHLOROPLASTIC"/>
    <property type="match status" value="1"/>
</dbReference>
<dbReference type="Pfam" id="PF02416">
    <property type="entry name" value="TatA_B_E"/>
    <property type="match status" value="1"/>
</dbReference>
<dbReference type="PRINTS" id="PR01506">
    <property type="entry name" value="TATBPROTEIN"/>
</dbReference>
<evidence type="ECO:0000255" key="1">
    <source>
        <dbReference type="HAMAP-Rule" id="MF_00237"/>
    </source>
</evidence>
<evidence type="ECO:0000256" key="2">
    <source>
        <dbReference type="SAM" id="MobiDB-lite"/>
    </source>
</evidence>
<organism>
    <name type="scientific">Xylella fastidiosa (strain 9a5c)</name>
    <dbReference type="NCBI Taxonomy" id="160492"/>
    <lineage>
        <taxon>Bacteria</taxon>
        <taxon>Pseudomonadati</taxon>
        <taxon>Pseudomonadota</taxon>
        <taxon>Gammaproteobacteria</taxon>
        <taxon>Lysobacterales</taxon>
        <taxon>Lysobacteraceae</taxon>
        <taxon>Xylella</taxon>
    </lineage>
</organism>
<keyword id="KW-0997">Cell inner membrane</keyword>
<keyword id="KW-1003">Cell membrane</keyword>
<keyword id="KW-0472">Membrane</keyword>
<keyword id="KW-0653">Protein transport</keyword>
<keyword id="KW-0811">Translocation</keyword>
<keyword id="KW-0812">Transmembrane</keyword>
<keyword id="KW-1133">Transmembrane helix</keyword>
<keyword id="KW-0813">Transport</keyword>
<gene>
    <name evidence="1" type="primary">tatB</name>
    <name type="ordered locus">XF_0563</name>
</gene>
<protein>
    <recommendedName>
        <fullName evidence="1">Sec-independent protein translocase protein TatB</fullName>
    </recommendedName>
</protein>
<feature type="chain" id="PRO_0000192679" description="Sec-independent protein translocase protein TatB">
    <location>
        <begin position="1"/>
        <end position="140"/>
    </location>
</feature>
<feature type="transmembrane region" description="Helical" evidence="1">
    <location>
        <begin position="1"/>
        <end position="21"/>
    </location>
</feature>
<feature type="region of interest" description="Disordered" evidence="2">
    <location>
        <begin position="119"/>
        <end position="140"/>
    </location>
</feature>
<feature type="compositionally biased region" description="Polar residues" evidence="2">
    <location>
        <begin position="128"/>
        <end position="140"/>
    </location>
</feature>
<accession>Q9PFU4</accession>
<proteinExistence type="inferred from homology"/>
<reference key="1">
    <citation type="journal article" date="2000" name="Nature">
        <title>The genome sequence of the plant pathogen Xylella fastidiosa.</title>
        <authorList>
            <person name="Simpson A.J.G."/>
            <person name="Reinach F.C."/>
            <person name="Arruda P."/>
            <person name="Abreu F.A."/>
            <person name="Acencio M."/>
            <person name="Alvarenga R."/>
            <person name="Alves L.M.C."/>
            <person name="Araya J.E."/>
            <person name="Baia G.S."/>
            <person name="Baptista C.S."/>
            <person name="Barros M.H."/>
            <person name="Bonaccorsi E.D."/>
            <person name="Bordin S."/>
            <person name="Bove J.M."/>
            <person name="Briones M.R.S."/>
            <person name="Bueno M.R.P."/>
            <person name="Camargo A.A."/>
            <person name="Camargo L.E.A."/>
            <person name="Carraro D.M."/>
            <person name="Carrer H."/>
            <person name="Colauto N.B."/>
            <person name="Colombo C."/>
            <person name="Costa F.F."/>
            <person name="Costa M.C.R."/>
            <person name="Costa-Neto C.M."/>
            <person name="Coutinho L.L."/>
            <person name="Cristofani M."/>
            <person name="Dias-Neto E."/>
            <person name="Docena C."/>
            <person name="El-Dorry H."/>
            <person name="Facincani A.P."/>
            <person name="Ferreira A.J.S."/>
            <person name="Ferreira V.C.A."/>
            <person name="Ferro J.A."/>
            <person name="Fraga J.S."/>
            <person name="Franca S.C."/>
            <person name="Franco M.C."/>
            <person name="Frohme M."/>
            <person name="Furlan L.R."/>
            <person name="Garnier M."/>
            <person name="Goldman G.H."/>
            <person name="Goldman M.H.S."/>
            <person name="Gomes S.L."/>
            <person name="Gruber A."/>
            <person name="Ho P.L."/>
            <person name="Hoheisel J.D."/>
            <person name="Junqueira M.L."/>
            <person name="Kemper E.L."/>
            <person name="Kitajima J.P."/>
            <person name="Krieger J.E."/>
            <person name="Kuramae E.E."/>
            <person name="Laigret F."/>
            <person name="Lambais M.R."/>
            <person name="Leite L.C.C."/>
            <person name="Lemos E.G.M."/>
            <person name="Lemos M.V.F."/>
            <person name="Lopes S.A."/>
            <person name="Lopes C.R."/>
            <person name="Machado J.A."/>
            <person name="Machado M.A."/>
            <person name="Madeira A.M.B.N."/>
            <person name="Madeira H.M.F."/>
            <person name="Marino C.L."/>
            <person name="Marques M.V."/>
            <person name="Martins E.A.L."/>
            <person name="Martins E.M.F."/>
            <person name="Matsukuma A.Y."/>
            <person name="Menck C.F.M."/>
            <person name="Miracca E.C."/>
            <person name="Miyaki C.Y."/>
            <person name="Monteiro-Vitorello C.B."/>
            <person name="Moon D.H."/>
            <person name="Nagai M.A."/>
            <person name="Nascimento A.L.T.O."/>
            <person name="Netto L.E.S."/>
            <person name="Nhani A. Jr."/>
            <person name="Nobrega F.G."/>
            <person name="Nunes L.R."/>
            <person name="Oliveira M.A."/>
            <person name="de Oliveira M.C."/>
            <person name="de Oliveira R.C."/>
            <person name="Palmieri D.A."/>
            <person name="Paris A."/>
            <person name="Peixoto B.R."/>
            <person name="Pereira G.A.G."/>
            <person name="Pereira H.A. Jr."/>
            <person name="Pesquero J.B."/>
            <person name="Quaggio R.B."/>
            <person name="Roberto P.G."/>
            <person name="Rodrigues V."/>
            <person name="de Rosa A.J.M."/>
            <person name="de Rosa V.E. Jr."/>
            <person name="de Sa R.G."/>
            <person name="Santelli R.V."/>
            <person name="Sawasaki H.E."/>
            <person name="da Silva A.C.R."/>
            <person name="da Silva A.M."/>
            <person name="da Silva F.R."/>
            <person name="Silva W.A. Jr."/>
            <person name="da Silveira J.F."/>
            <person name="Silvestri M.L.Z."/>
            <person name="Siqueira W.J."/>
            <person name="de Souza A.A."/>
            <person name="de Souza A.P."/>
            <person name="Terenzi M.F."/>
            <person name="Truffi D."/>
            <person name="Tsai S.M."/>
            <person name="Tsuhako M.H."/>
            <person name="Vallada H."/>
            <person name="Van Sluys M.A."/>
            <person name="Verjovski-Almeida S."/>
            <person name="Vettore A.L."/>
            <person name="Zago M.A."/>
            <person name="Zatz M."/>
            <person name="Meidanis J."/>
            <person name="Setubal J.C."/>
        </authorList>
    </citation>
    <scope>NUCLEOTIDE SEQUENCE [LARGE SCALE GENOMIC DNA]</scope>
    <source>
        <strain>9a5c</strain>
    </source>
</reference>